<organism>
    <name type="scientific">Escherichia coli (strain B / REL606)</name>
    <dbReference type="NCBI Taxonomy" id="413997"/>
    <lineage>
        <taxon>Bacteria</taxon>
        <taxon>Pseudomonadati</taxon>
        <taxon>Pseudomonadota</taxon>
        <taxon>Gammaproteobacteria</taxon>
        <taxon>Enterobacterales</taxon>
        <taxon>Enterobacteriaceae</taxon>
        <taxon>Escherichia</taxon>
    </lineage>
</organism>
<evidence type="ECO:0000255" key="1">
    <source>
        <dbReference type="HAMAP-Rule" id="MF_02108"/>
    </source>
</evidence>
<feature type="chain" id="PRO_0000387756" description="HTH-type transcriptional regulator MurR">
    <location>
        <begin position="1"/>
        <end position="285"/>
    </location>
</feature>
<feature type="domain" description="HTH rpiR-type" evidence="1">
    <location>
        <begin position="1"/>
        <end position="77"/>
    </location>
</feature>
<feature type="domain" description="SIS" evidence="1">
    <location>
        <begin position="128"/>
        <end position="268"/>
    </location>
</feature>
<feature type="DNA-binding region" description="H-T-H motif" evidence="1">
    <location>
        <begin position="37"/>
        <end position="56"/>
    </location>
</feature>
<reference key="1">
    <citation type="journal article" date="2009" name="J. Mol. Biol.">
        <title>Genome sequences of Escherichia coli B strains REL606 and BL21(DE3).</title>
        <authorList>
            <person name="Jeong H."/>
            <person name="Barbe V."/>
            <person name="Lee C.H."/>
            <person name="Vallenet D."/>
            <person name="Yu D.S."/>
            <person name="Choi S.H."/>
            <person name="Couloux A."/>
            <person name="Lee S.W."/>
            <person name="Yoon S.H."/>
            <person name="Cattolico L."/>
            <person name="Hur C.G."/>
            <person name="Park H.S."/>
            <person name="Segurens B."/>
            <person name="Kim S.C."/>
            <person name="Oh T.K."/>
            <person name="Lenski R.E."/>
            <person name="Studier F.W."/>
            <person name="Daegelen P."/>
            <person name="Kim J.F."/>
        </authorList>
    </citation>
    <scope>NUCLEOTIDE SEQUENCE [LARGE SCALE GENOMIC DNA]</scope>
    <source>
        <strain>B / REL606</strain>
    </source>
</reference>
<protein>
    <recommendedName>
        <fullName evidence="1">HTH-type transcriptional regulator MurR</fullName>
    </recommendedName>
    <alternativeName>
        <fullName evidence="1">MurPQ operon repressor</fullName>
    </alternativeName>
</protein>
<proteinExistence type="inferred from homology"/>
<comment type="function">
    <text evidence="1">Represses the expression of the murPQ operon involved in the uptake and degradation of N-acetylmuramic acid (MurNAc). Binds to two adjacent inverted repeats within the operator region. MurNAc 6-phosphate, the substrate of MurQ, is the specific inducer that weakens binding of MurR to the operator.</text>
</comment>
<comment type="pathway">
    <text>Amino-sugar metabolism; N-acetylmuramate degradation [regulation].</text>
</comment>
<comment type="subunit">
    <text evidence="1">Homotetramer.</text>
</comment>
<gene>
    <name evidence="1" type="primary">murR</name>
    <name type="ordered locus">ECB_02327</name>
</gene>
<keyword id="KW-0119">Carbohydrate metabolism</keyword>
<keyword id="KW-0238">DNA-binding</keyword>
<keyword id="KW-0678">Repressor</keyword>
<keyword id="KW-0804">Transcription</keyword>
<keyword id="KW-0805">Transcription regulation</keyword>
<accession>C6UMS6</accession>
<dbReference type="EMBL" id="CP000819">
    <property type="protein sequence ID" value="ACT39982.1"/>
    <property type="molecule type" value="Genomic_DNA"/>
</dbReference>
<dbReference type="RefSeq" id="WP_000966478.1">
    <property type="nucleotide sequence ID" value="NC_012967.1"/>
</dbReference>
<dbReference type="SMR" id="C6UMS6"/>
<dbReference type="KEGG" id="ebr:ECB_02327"/>
<dbReference type="HOGENOM" id="CLU_055769_0_2_6"/>
<dbReference type="BioCyc" id="ECOL413997:GCQD-2541-MONOMER"/>
<dbReference type="UniPathway" id="UPA00342"/>
<dbReference type="GO" id="GO:0097367">
    <property type="term" value="F:carbohydrate derivative binding"/>
    <property type="evidence" value="ECO:0007669"/>
    <property type="project" value="InterPro"/>
</dbReference>
<dbReference type="GO" id="GO:0003677">
    <property type="term" value="F:DNA binding"/>
    <property type="evidence" value="ECO:0007669"/>
    <property type="project" value="UniProtKB-KW"/>
</dbReference>
<dbReference type="GO" id="GO:0003700">
    <property type="term" value="F:DNA-binding transcription factor activity"/>
    <property type="evidence" value="ECO:0007669"/>
    <property type="project" value="UniProtKB-UniRule"/>
</dbReference>
<dbReference type="GO" id="GO:1901135">
    <property type="term" value="P:carbohydrate derivative metabolic process"/>
    <property type="evidence" value="ECO:0007669"/>
    <property type="project" value="InterPro"/>
</dbReference>
<dbReference type="GO" id="GO:0097173">
    <property type="term" value="P:N-acetylmuramic acid catabolic process"/>
    <property type="evidence" value="ECO:0007669"/>
    <property type="project" value="UniProtKB-UniPathway"/>
</dbReference>
<dbReference type="GO" id="GO:0045892">
    <property type="term" value="P:negative regulation of DNA-templated transcription"/>
    <property type="evidence" value="ECO:0007669"/>
    <property type="project" value="UniProtKB-UniRule"/>
</dbReference>
<dbReference type="GO" id="GO:0043470">
    <property type="term" value="P:regulation of carbohydrate catabolic process"/>
    <property type="evidence" value="ECO:0007669"/>
    <property type="project" value="UniProtKB-UniRule"/>
</dbReference>
<dbReference type="CDD" id="cd05013">
    <property type="entry name" value="SIS_RpiR"/>
    <property type="match status" value="1"/>
</dbReference>
<dbReference type="FunFam" id="3.40.50.10490:FF:000028">
    <property type="entry name" value="HTH-type transcriptional regulator MurR"/>
    <property type="match status" value="1"/>
</dbReference>
<dbReference type="Gene3D" id="3.40.50.10490">
    <property type="entry name" value="Glucose-6-phosphate isomerase like protein, domain 1"/>
    <property type="match status" value="1"/>
</dbReference>
<dbReference type="Gene3D" id="1.10.10.10">
    <property type="entry name" value="Winged helix-like DNA-binding domain superfamily/Winged helix DNA-binding domain"/>
    <property type="match status" value="1"/>
</dbReference>
<dbReference type="HAMAP" id="MF_02108">
    <property type="entry name" value="HTH_type_MurR"/>
    <property type="match status" value="1"/>
</dbReference>
<dbReference type="InterPro" id="IPR009057">
    <property type="entry name" value="Homeodomain-like_sf"/>
</dbReference>
<dbReference type="InterPro" id="IPR000281">
    <property type="entry name" value="HTH_RpiR"/>
</dbReference>
<dbReference type="InterPro" id="IPR047640">
    <property type="entry name" value="RpiR-like"/>
</dbReference>
<dbReference type="InterPro" id="IPR035472">
    <property type="entry name" value="RpiR-like_SIS"/>
</dbReference>
<dbReference type="InterPro" id="IPR001347">
    <property type="entry name" value="SIS_dom"/>
</dbReference>
<dbReference type="InterPro" id="IPR046348">
    <property type="entry name" value="SIS_dom_sf"/>
</dbReference>
<dbReference type="InterPro" id="IPR022821">
    <property type="entry name" value="Tscrpt_reg_HTH_MurR"/>
</dbReference>
<dbReference type="InterPro" id="IPR036388">
    <property type="entry name" value="WH-like_DNA-bd_sf"/>
</dbReference>
<dbReference type="NCBIfam" id="NF012026">
    <property type="entry name" value="PRK15482.1"/>
    <property type="match status" value="1"/>
</dbReference>
<dbReference type="PANTHER" id="PTHR30514">
    <property type="entry name" value="GLUCOKINASE"/>
    <property type="match status" value="1"/>
</dbReference>
<dbReference type="PANTHER" id="PTHR30514:SF17">
    <property type="entry name" value="HTH-TYPE TRANSCRIPTIONAL REGULATOR MURR"/>
    <property type="match status" value="1"/>
</dbReference>
<dbReference type="Pfam" id="PF01418">
    <property type="entry name" value="HTH_6"/>
    <property type="match status" value="1"/>
</dbReference>
<dbReference type="Pfam" id="PF01380">
    <property type="entry name" value="SIS"/>
    <property type="match status" value="1"/>
</dbReference>
<dbReference type="SUPFAM" id="SSF46689">
    <property type="entry name" value="Homeodomain-like"/>
    <property type="match status" value="1"/>
</dbReference>
<dbReference type="SUPFAM" id="SSF53697">
    <property type="entry name" value="SIS domain"/>
    <property type="match status" value="1"/>
</dbReference>
<dbReference type="PROSITE" id="PS51071">
    <property type="entry name" value="HTH_RPIR"/>
    <property type="match status" value="1"/>
</dbReference>
<dbReference type="PROSITE" id="PS51464">
    <property type="entry name" value="SIS"/>
    <property type="match status" value="1"/>
</dbReference>
<sequence length="285" mass="31283">MLYLTKISNAGSEFTENEQKIADFLRARVSELKSVSSRQMAKQLGISQSSIVKFAQKLGAQGFTELRMALIGEYSASREKTNATALHLHSSITSDDSLEVIARKLNREKELALEQTCALFDYARLQKIIDVISKAQFIQITGLGGSALVGRDLSFKLMKIGYRVACEADTHVQATVSQALKKGDVQIAISYSGSKKEIVLCAEAARKQGATVIAITSLADSPLRRLAHFTLDTVSGETEWRSSSMSTRTAQNSVTDLLFVGLVQLNDVESLKMIQRSSELTQRLK</sequence>
<name>MURR_ECOBR</name>